<evidence type="ECO:0000250" key="1"/>
<evidence type="ECO:0000255" key="2">
    <source>
        <dbReference type="PROSITE-ProRule" id="PRU00091"/>
    </source>
</evidence>
<evidence type="ECO:0000256" key="3">
    <source>
        <dbReference type="SAM" id="MobiDB-lite"/>
    </source>
</evidence>
<evidence type="ECO:0000305" key="4"/>
<keyword id="KW-0479">Metal-binding</keyword>
<keyword id="KW-0597">Phosphoprotein</keyword>
<keyword id="KW-1185">Reference proteome</keyword>
<keyword id="KW-0862">Zinc</keyword>
<keyword id="KW-0863">Zinc-finger</keyword>
<sequence>MICCEIQQKSHKKNKPQPDDKSLLARFFHADRSLTAVASELDSFDGRAEPDRCSRLVSRLRQNQDKVLSITNLIMEELLGEDRDPRAFRAKFPEEVLQENLAGQLWFGAECLAAGSSIMNREVESKEMRPLAQAVTKSLGNVRVLLRDQCLRNNVPNSKTLHLDLNDYTTEQLYESLKIFDRLFAEFELSYVSAMVQVKSRHEYEMQQWIGVLFSETLQRALKIGLLDQDMVDAFDPGLMFSIPRLAIVAGLVVYAKGPLDMDMPGDQLSEMFRPFRTILIKIRDLLRNLNNQELYQLEKLLCTNEDINTKVPVGSSSIEAPTPEHSSTPTTSSNNNNNNKSSSSSSGTGSGSGAGTVERLVDQRNNNNNQQNSNESTTLPPRSPSMLSLSASSTPTASPAPSPTPSHSIASTTSSAASSNSTHPPADWSDGDDEDEDEEEDEEEDELEDTEDDTDEEQLLKDIVAADCASGYLIPNTNLGNLLQPQQVPLTDNFVASEDDDEYGTGDQQQEQPQQQGHRKEDEEEPSTSAALQRLRLASSDDSEPHRDQGETIKSTEEQEQQQQQQEQQTLQSSRQRHSHSHSHSHRHHHRHHHHHHHSTHQQQLQHQPHHHQPHPHRLTRSGRKRCSMEAAVEVEQQEQGLASGDTSAASSLSDDVSLAMRNTTARLKFNTENLLHRLFVCIAGVADQLQTNFASDLRQILRSVFLMNMSSVEEEQIEIPEKTKESELFEFRASENDVIQESAGSNQSIYSAEEVNPELDNVFSAGSRHSAGATMQRNNTIDNPSSSNTSSSSATTRNHVTRSRSLGDQETIARSMPAPVHQQEQEMQQQQDHQQQQHQHQVQVQLQRQRNNSVGSNTPSSASSTSSSSEQNSPVSTRSGSSRRRLQSNNETQMPSSTSTATAAATLAPPAWIPDGKAPRCMSCQTPFTAFRRRHHCRNCGGVFCGVCSNATAPLPKYGLTKAVRVCRDCYVREVQVRSSSTTTSVSVNVGVQMQSQAGRVQTATAS</sequence>
<dbReference type="EMBL" id="CH479179">
    <property type="protein sequence ID" value="EDW24010.1"/>
    <property type="molecule type" value="Genomic_DNA"/>
</dbReference>
<dbReference type="RefSeq" id="XP_002013024.1">
    <property type="nucleotide sequence ID" value="XM_002012988.1"/>
</dbReference>
<dbReference type="SMR" id="B4G2G5"/>
<dbReference type="EnsemblMetazoa" id="FBtr0189225">
    <property type="protein sequence ID" value="FBpp0187717"/>
    <property type="gene ID" value="FBgn0161200"/>
</dbReference>
<dbReference type="eggNOG" id="KOG1819">
    <property type="taxonomic scope" value="Eukaryota"/>
</dbReference>
<dbReference type="HOGENOM" id="CLU_007360_1_0_1"/>
<dbReference type="OMA" id="CYVREVQ"/>
<dbReference type="OrthoDB" id="20035at2759"/>
<dbReference type="PhylomeDB" id="B4G2G5"/>
<dbReference type="Proteomes" id="UP000008744">
    <property type="component" value="Unassembled WGS sequence"/>
</dbReference>
<dbReference type="GO" id="GO:0031901">
    <property type="term" value="C:early endosome membrane"/>
    <property type="evidence" value="ECO:0007669"/>
    <property type="project" value="TreeGrafter"/>
</dbReference>
<dbReference type="GO" id="GO:0008270">
    <property type="term" value="F:zinc ion binding"/>
    <property type="evidence" value="ECO:0007669"/>
    <property type="project" value="UniProtKB-KW"/>
</dbReference>
<dbReference type="CDD" id="cd15731">
    <property type="entry name" value="FYVE_LST2"/>
    <property type="match status" value="1"/>
</dbReference>
<dbReference type="FunFam" id="3.30.40.10:FF:000073">
    <property type="entry name" value="myotubularin-related protein 4 isoform X2"/>
    <property type="match status" value="1"/>
</dbReference>
<dbReference type="Gene3D" id="3.30.40.10">
    <property type="entry name" value="Zinc/RING finger domain, C3HC4 (zinc finger)"/>
    <property type="match status" value="1"/>
</dbReference>
<dbReference type="InterPro" id="IPR043269">
    <property type="entry name" value="FYVE_LST2"/>
</dbReference>
<dbReference type="InterPro" id="IPR051118">
    <property type="entry name" value="LST-2"/>
</dbReference>
<dbReference type="InterPro" id="IPR000306">
    <property type="entry name" value="Znf_FYVE"/>
</dbReference>
<dbReference type="InterPro" id="IPR017455">
    <property type="entry name" value="Znf_FYVE-rel"/>
</dbReference>
<dbReference type="InterPro" id="IPR011011">
    <property type="entry name" value="Znf_FYVE_PHD"/>
</dbReference>
<dbReference type="InterPro" id="IPR013083">
    <property type="entry name" value="Znf_RING/FYVE/PHD"/>
</dbReference>
<dbReference type="PANTHER" id="PTHR46465">
    <property type="entry name" value="LATERAL SIGNALING TARGET PROTEIN 2 HOMOLOG"/>
    <property type="match status" value="1"/>
</dbReference>
<dbReference type="PANTHER" id="PTHR46465:SF2">
    <property type="entry name" value="LATERAL SIGNALING TARGET PROTEIN 2 HOMOLOG"/>
    <property type="match status" value="1"/>
</dbReference>
<dbReference type="Pfam" id="PF01363">
    <property type="entry name" value="FYVE"/>
    <property type="match status" value="1"/>
</dbReference>
<dbReference type="SMART" id="SM00064">
    <property type="entry name" value="FYVE"/>
    <property type="match status" value="1"/>
</dbReference>
<dbReference type="SUPFAM" id="SSF57903">
    <property type="entry name" value="FYVE/PHD zinc finger"/>
    <property type="match status" value="1"/>
</dbReference>
<dbReference type="PROSITE" id="PS50178">
    <property type="entry name" value="ZF_FYVE"/>
    <property type="match status" value="1"/>
</dbReference>
<reference key="1">
    <citation type="journal article" date="2007" name="Nature">
        <title>Evolution of genes and genomes on the Drosophila phylogeny.</title>
        <authorList>
            <consortium name="Drosophila 12 genomes consortium"/>
        </authorList>
    </citation>
    <scope>NUCLEOTIDE SEQUENCE [LARGE SCALE GENOMIC DNA]</scope>
    <source>
        <strain>MSH-3 / Tucson 14011-0111.49</strain>
    </source>
</reference>
<proteinExistence type="inferred from homology"/>
<accession>B4G2G5</accession>
<feature type="chain" id="PRO_0000378967" description="Lateral signaling target protein 2 homolog">
    <location>
        <begin position="1"/>
        <end position="1009"/>
    </location>
</feature>
<feature type="zinc finger region" description="FYVE-type" evidence="2">
    <location>
        <begin position="917"/>
        <end position="977"/>
    </location>
</feature>
<feature type="region of interest" description="Disordered" evidence="3">
    <location>
        <begin position="313"/>
        <end position="460"/>
    </location>
</feature>
<feature type="region of interest" description="Disordered" evidence="3">
    <location>
        <begin position="497"/>
        <end position="629"/>
    </location>
</feature>
<feature type="region of interest" description="Disordered" evidence="3">
    <location>
        <begin position="777"/>
        <end position="905"/>
    </location>
</feature>
<feature type="compositionally biased region" description="Low complexity" evidence="3">
    <location>
        <begin position="327"/>
        <end position="348"/>
    </location>
</feature>
<feature type="compositionally biased region" description="Low complexity" evidence="3">
    <location>
        <begin position="364"/>
        <end position="398"/>
    </location>
</feature>
<feature type="compositionally biased region" description="Low complexity" evidence="3">
    <location>
        <begin position="406"/>
        <end position="427"/>
    </location>
</feature>
<feature type="compositionally biased region" description="Acidic residues" evidence="3">
    <location>
        <begin position="430"/>
        <end position="458"/>
    </location>
</feature>
<feature type="compositionally biased region" description="Basic and acidic residues" evidence="3">
    <location>
        <begin position="544"/>
        <end position="558"/>
    </location>
</feature>
<feature type="compositionally biased region" description="Low complexity" evidence="3">
    <location>
        <begin position="562"/>
        <end position="575"/>
    </location>
</feature>
<feature type="compositionally biased region" description="Basic residues" evidence="3">
    <location>
        <begin position="576"/>
        <end position="601"/>
    </location>
</feature>
<feature type="compositionally biased region" description="Basic residues" evidence="3">
    <location>
        <begin position="609"/>
        <end position="627"/>
    </location>
</feature>
<feature type="compositionally biased region" description="Low complexity" evidence="3">
    <location>
        <begin position="780"/>
        <end position="798"/>
    </location>
</feature>
<feature type="compositionally biased region" description="Low complexity" evidence="3">
    <location>
        <begin position="822"/>
        <end position="878"/>
    </location>
</feature>
<feature type="binding site" evidence="2">
    <location>
        <position position="923"/>
    </location>
    <ligand>
        <name>Zn(2+)</name>
        <dbReference type="ChEBI" id="CHEBI:29105"/>
        <label>1</label>
    </ligand>
</feature>
<feature type="binding site" evidence="2">
    <location>
        <position position="926"/>
    </location>
    <ligand>
        <name>Zn(2+)</name>
        <dbReference type="ChEBI" id="CHEBI:29105"/>
        <label>1</label>
    </ligand>
</feature>
<feature type="binding site" evidence="2">
    <location>
        <position position="939"/>
    </location>
    <ligand>
        <name>Zn(2+)</name>
        <dbReference type="ChEBI" id="CHEBI:29105"/>
        <label>2</label>
    </ligand>
</feature>
<feature type="binding site" evidence="2">
    <location>
        <position position="942"/>
    </location>
    <ligand>
        <name>Zn(2+)</name>
        <dbReference type="ChEBI" id="CHEBI:29105"/>
        <label>2</label>
    </ligand>
</feature>
<feature type="binding site" evidence="2">
    <location>
        <position position="947"/>
    </location>
    <ligand>
        <name>Zn(2+)</name>
        <dbReference type="ChEBI" id="CHEBI:29105"/>
        <label>1</label>
    </ligand>
</feature>
<feature type="binding site" evidence="2">
    <location>
        <position position="950"/>
    </location>
    <ligand>
        <name>Zn(2+)</name>
        <dbReference type="ChEBI" id="CHEBI:29105"/>
        <label>1</label>
    </ligand>
</feature>
<feature type="binding site" evidence="2">
    <location>
        <position position="969"/>
    </location>
    <ligand>
        <name>Zn(2+)</name>
        <dbReference type="ChEBI" id="CHEBI:29105"/>
        <label>2</label>
    </ligand>
</feature>
<feature type="binding site" evidence="2">
    <location>
        <position position="972"/>
    </location>
    <ligand>
        <name>Zn(2+)</name>
        <dbReference type="ChEBI" id="CHEBI:29105"/>
        <label>2</label>
    </ligand>
</feature>
<feature type="modified residue" description="Phosphoserine" evidence="1">
    <location>
        <position position="541"/>
    </location>
</feature>
<feature type="modified residue" description="Phosphoserine" evidence="1">
    <location>
        <position position="807"/>
    </location>
</feature>
<name>LST2_DROPE</name>
<gene>
    <name type="ORF">GL23610</name>
</gene>
<organism>
    <name type="scientific">Drosophila persimilis</name>
    <name type="common">Fruit fly</name>
    <dbReference type="NCBI Taxonomy" id="7234"/>
    <lineage>
        <taxon>Eukaryota</taxon>
        <taxon>Metazoa</taxon>
        <taxon>Ecdysozoa</taxon>
        <taxon>Arthropoda</taxon>
        <taxon>Hexapoda</taxon>
        <taxon>Insecta</taxon>
        <taxon>Pterygota</taxon>
        <taxon>Neoptera</taxon>
        <taxon>Endopterygota</taxon>
        <taxon>Diptera</taxon>
        <taxon>Brachycera</taxon>
        <taxon>Muscomorpha</taxon>
        <taxon>Ephydroidea</taxon>
        <taxon>Drosophilidae</taxon>
        <taxon>Drosophila</taxon>
        <taxon>Sophophora</taxon>
    </lineage>
</organism>
<comment type="function">
    <text evidence="1">Negative regulator of epidermal growth factor receptor (EGFR) signaling.</text>
</comment>
<comment type="similarity">
    <text evidence="4">Belongs to the lst-2 family.</text>
</comment>
<protein>
    <recommendedName>
        <fullName>Lateral signaling target protein 2 homolog</fullName>
    </recommendedName>
</protein>